<name>METL5_MOUSE</name>
<organism>
    <name type="scientific">Mus musculus</name>
    <name type="common">Mouse</name>
    <dbReference type="NCBI Taxonomy" id="10090"/>
    <lineage>
        <taxon>Eukaryota</taxon>
        <taxon>Metazoa</taxon>
        <taxon>Chordata</taxon>
        <taxon>Craniata</taxon>
        <taxon>Vertebrata</taxon>
        <taxon>Euteleostomi</taxon>
        <taxon>Mammalia</taxon>
        <taxon>Eutheria</taxon>
        <taxon>Euarchontoglires</taxon>
        <taxon>Glires</taxon>
        <taxon>Rodentia</taxon>
        <taxon>Myomorpha</taxon>
        <taxon>Muroidea</taxon>
        <taxon>Muridae</taxon>
        <taxon>Murinae</taxon>
        <taxon>Mus</taxon>
        <taxon>Mus</taxon>
    </lineage>
</organism>
<keyword id="KW-0966">Cell projection</keyword>
<keyword id="KW-0489">Methyltransferase</keyword>
<keyword id="KW-0539">Nucleus</keyword>
<keyword id="KW-1185">Reference proteome</keyword>
<keyword id="KW-0949">S-adenosyl-L-methionine</keyword>
<keyword id="KW-0770">Synapse</keyword>
<keyword id="KW-0808">Transferase</keyword>
<dbReference type="EC" id="2.1.1.-" evidence="4"/>
<dbReference type="EMBL" id="BC027547">
    <property type="protein sequence ID" value="AAH27547.1"/>
    <property type="status" value="ALT_FRAME"/>
    <property type="molecule type" value="mRNA"/>
</dbReference>
<dbReference type="CCDS" id="CCDS16103.2"/>
<dbReference type="RefSeq" id="NP_083556.2">
    <property type="nucleotide sequence ID" value="NM_029280.4"/>
</dbReference>
<dbReference type="RefSeq" id="XP_030108023.1">
    <property type="nucleotide sequence ID" value="XM_030252163.2"/>
</dbReference>
<dbReference type="SMR" id="Q8K1A0"/>
<dbReference type="FunCoup" id="Q8K1A0">
    <property type="interactions" value="2262"/>
</dbReference>
<dbReference type="STRING" id="10090.ENSMUSP00000050907"/>
<dbReference type="PhosphoSitePlus" id="Q8K1A0"/>
<dbReference type="PaxDb" id="10090-ENSMUSP00000050907"/>
<dbReference type="PeptideAtlas" id="Q8K1A0"/>
<dbReference type="ProteomicsDB" id="292298"/>
<dbReference type="Pumba" id="Q8K1A0"/>
<dbReference type="Antibodypedia" id="35324">
    <property type="antibodies" value="83 antibodies from 20 providers"/>
</dbReference>
<dbReference type="Ensembl" id="ENSMUST00000060447.13">
    <property type="protein sequence ID" value="ENSMUSP00000050907.7"/>
    <property type="gene ID" value="ENSMUSG00000051730.16"/>
</dbReference>
<dbReference type="GeneID" id="75422"/>
<dbReference type="KEGG" id="mmu:75422"/>
<dbReference type="UCSC" id="uc008jyv.3">
    <property type="organism name" value="mouse"/>
</dbReference>
<dbReference type="AGR" id="MGI:1922672"/>
<dbReference type="CTD" id="29081"/>
<dbReference type="MGI" id="MGI:1922672">
    <property type="gene designation" value="Mettl5"/>
</dbReference>
<dbReference type="VEuPathDB" id="HostDB:ENSMUSG00000051730"/>
<dbReference type="eggNOG" id="KOG3420">
    <property type="taxonomic scope" value="Eukaryota"/>
</dbReference>
<dbReference type="GeneTree" id="ENSGT00390000000227"/>
<dbReference type="HOGENOM" id="CLU_074702_1_1_1"/>
<dbReference type="InParanoid" id="Q8K1A0"/>
<dbReference type="OMA" id="DVVYSIH"/>
<dbReference type="OrthoDB" id="419617at2759"/>
<dbReference type="PhylomeDB" id="Q8K1A0"/>
<dbReference type="TreeFam" id="TF314953"/>
<dbReference type="BioGRID-ORCS" id="75422">
    <property type="hits" value="1 hit in 80 CRISPR screens"/>
</dbReference>
<dbReference type="ChiTaRS" id="Mettl5">
    <property type="organism name" value="mouse"/>
</dbReference>
<dbReference type="PRO" id="PR:Q8K1A0"/>
<dbReference type="Proteomes" id="UP000000589">
    <property type="component" value="Chromosome 2"/>
</dbReference>
<dbReference type="RNAct" id="Q8K1A0">
    <property type="molecule type" value="protein"/>
</dbReference>
<dbReference type="Bgee" id="ENSMUSG00000051730">
    <property type="expression patterns" value="Expressed in left lobe of liver and 261 other cell types or tissues"/>
</dbReference>
<dbReference type="ExpressionAtlas" id="Q8K1A0">
    <property type="expression patterns" value="baseline and differential"/>
</dbReference>
<dbReference type="GO" id="GO:0042995">
    <property type="term" value="C:cell projection"/>
    <property type="evidence" value="ECO:0007669"/>
    <property type="project" value="UniProtKB-KW"/>
</dbReference>
<dbReference type="GO" id="GO:0005829">
    <property type="term" value="C:cytosol"/>
    <property type="evidence" value="ECO:0007669"/>
    <property type="project" value="Ensembl"/>
</dbReference>
<dbReference type="GO" id="GO:0001650">
    <property type="term" value="C:fibrillar center"/>
    <property type="evidence" value="ECO:0007669"/>
    <property type="project" value="Ensembl"/>
</dbReference>
<dbReference type="GO" id="GO:0005634">
    <property type="term" value="C:nucleus"/>
    <property type="evidence" value="ECO:0000250"/>
    <property type="project" value="UniProtKB"/>
</dbReference>
<dbReference type="GO" id="GO:0098794">
    <property type="term" value="C:postsynapse"/>
    <property type="evidence" value="ECO:0000250"/>
    <property type="project" value="UniProtKB"/>
</dbReference>
<dbReference type="GO" id="GO:0098793">
    <property type="term" value="C:presynapse"/>
    <property type="evidence" value="ECO:0000250"/>
    <property type="project" value="UniProtKB"/>
</dbReference>
<dbReference type="GO" id="GO:0003676">
    <property type="term" value="F:nucleic acid binding"/>
    <property type="evidence" value="ECO:0007669"/>
    <property type="project" value="InterPro"/>
</dbReference>
<dbReference type="GO" id="GO:0008988">
    <property type="term" value="F:rRNA (adenine-N6-)-methyltransferase activity"/>
    <property type="evidence" value="ECO:0000314"/>
    <property type="project" value="UniProtKB"/>
</dbReference>
<dbReference type="GO" id="GO:1904047">
    <property type="term" value="F:S-adenosyl-L-methionine binding"/>
    <property type="evidence" value="ECO:0000250"/>
    <property type="project" value="UniProtKB"/>
</dbReference>
<dbReference type="GO" id="GO:0045727">
    <property type="term" value="P:positive regulation of translation"/>
    <property type="evidence" value="ECO:0000315"/>
    <property type="project" value="UniProtKB"/>
</dbReference>
<dbReference type="GO" id="GO:0031167">
    <property type="term" value="P:rRNA methylation"/>
    <property type="evidence" value="ECO:0000314"/>
    <property type="project" value="UniProtKB"/>
</dbReference>
<dbReference type="GO" id="GO:0048863">
    <property type="term" value="P:stem cell differentiation"/>
    <property type="evidence" value="ECO:0000315"/>
    <property type="project" value="UniProtKB"/>
</dbReference>
<dbReference type="CDD" id="cd02440">
    <property type="entry name" value="AdoMet_MTases"/>
    <property type="match status" value="1"/>
</dbReference>
<dbReference type="Gene3D" id="3.40.50.150">
    <property type="entry name" value="Vaccinia Virus protein VP39"/>
    <property type="match status" value="1"/>
</dbReference>
<dbReference type="InterPro" id="IPR002052">
    <property type="entry name" value="DNA_methylase_N6_adenine_CS"/>
</dbReference>
<dbReference type="InterPro" id="IPR051720">
    <property type="entry name" value="rRNA_MeTrfase/Polyamine_Synth"/>
</dbReference>
<dbReference type="InterPro" id="IPR029063">
    <property type="entry name" value="SAM-dependent_MTases_sf"/>
</dbReference>
<dbReference type="InterPro" id="IPR007848">
    <property type="entry name" value="Small_mtfrase_dom"/>
</dbReference>
<dbReference type="PANTHER" id="PTHR23290">
    <property type="entry name" value="RRNA N6-ADENOSINE-METHYLTRANSFERASE METTL5"/>
    <property type="match status" value="1"/>
</dbReference>
<dbReference type="PANTHER" id="PTHR23290:SF0">
    <property type="entry name" value="RRNA N6-ADENOSINE-METHYLTRANSFERASE METTL5"/>
    <property type="match status" value="1"/>
</dbReference>
<dbReference type="Pfam" id="PF05175">
    <property type="entry name" value="MTS"/>
    <property type="match status" value="1"/>
</dbReference>
<dbReference type="SUPFAM" id="SSF53335">
    <property type="entry name" value="S-adenosyl-L-methionine-dependent methyltransferases"/>
    <property type="match status" value="1"/>
</dbReference>
<dbReference type="PROSITE" id="PS00092">
    <property type="entry name" value="N6_MTASE"/>
    <property type="match status" value="1"/>
</dbReference>
<comment type="function">
    <text evidence="3 4 5">Catalytic subunit of a heterodimer with TRMT112, which specifically methylates the 6th position of adenine in position 1832 of 18S rRNA (PubMed:32783360, PubMed:35033535). N6-methylation of adenine(1832) in 18S rRNA resides in the decoding center of 18S rRNA and is required for translation and embryonic stem cells (ESCs) pluripotency and differentiation (PubMed:32217665, PubMed:32783360).</text>
</comment>
<comment type="catalytic activity">
    <reaction evidence="4">
        <text>adenosine(1832) in 18S rRNA + S-adenosyl-L-methionine = N(6)-methyladenosine(1832) in 18S rRNA + S-adenosyl-L-homocysteine + H(+)</text>
        <dbReference type="Rhea" id="RHEA:62612"/>
        <dbReference type="Rhea" id="RHEA-COMP:16144"/>
        <dbReference type="Rhea" id="RHEA-COMP:16145"/>
        <dbReference type="ChEBI" id="CHEBI:15378"/>
        <dbReference type="ChEBI" id="CHEBI:57856"/>
        <dbReference type="ChEBI" id="CHEBI:59789"/>
        <dbReference type="ChEBI" id="CHEBI:74411"/>
        <dbReference type="ChEBI" id="CHEBI:74449"/>
    </reaction>
    <physiologicalReaction direction="left-to-right" evidence="4">
        <dbReference type="Rhea" id="RHEA:62613"/>
    </physiologicalReaction>
</comment>
<comment type="activity regulation">
    <text evidence="1">rRNA N6-adenosine-methyltransferase activity is inhibited by zinc.</text>
</comment>
<comment type="subunit">
    <text evidence="1">Heterodimer; heterodimerizes with TRMT112.</text>
</comment>
<comment type="subcellular location">
    <subcellularLocation>
        <location evidence="1">Nucleus</location>
    </subcellularLocation>
    <subcellularLocation>
        <location evidence="1">Presynapse</location>
    </subcellularLocation>
    <subcellularLocation>
        <location evidence="1">Postsynapse</location>
    </subcellularLocation>
</comment>
<comment type="tissue specificity">
    <text evidence="2">Ubiquitously expressed in brain.</text>
</comment>
<comment type="disruption phenotype">
    <text evidence="3 4 5">Mice were born at non-Mendelian rates and develop morphological, such as craniofacial abnormalities, snout deviation due to altered nasal bone development and incomplete fusion of the frontal bone suture (PubMed:32217665). Mice display reduced body size and evidence of metabolic defects (PubMed:35033535). Mice also show behavioral abnormalities (PubMed:32217665). Deletion in embryonic stem cells (ESCs) results in a decrease in global translation rate, spontaneous loss of pluripotency and compromised differentiation potential (PubMed:32217665, PubMed:32783360). Cells show abolished level of N6-methylation of adenine(1832) in 18S rRNA (PubMed:35033535).</text>
</comment>
<comment type="similarity">
    <text evidence="7">Belongs to the methyltransferase superfamily. PrmA family.</text>
</comment>
<comment type="sequence caution" evidence="7">
    <conflict type="frameshift">
        <sequence resource="EMBL-CDS" id="AAH27547"/>
    </conflict>
</comment>
<evidence type="ECO:0000250" key="1">
    <source>
        <dbReference type="UniProtKB" id="Q9NRN9"/>
    </source>
</evidence>
<evidence type="ECO:0000269" key="2">
    <source>
    </source>
</evidence>
<evidence type="ECO:0000269" key="3">
    <source>
    </source>
</evidence>
<evidence type="ECO:0000269" key="4">
    <source>
    </source>
</evidence>
<evidence type="ECO:0000269" key="5">
    <source>
    </source>
</evidence>
<evidence type="ECO:0000303" key="6">
    <source>
    </source>
</evidence>
<evidence type="ECO:0000305" key="7"/>
<evidence type="ECO:0000312" key="8">
    <source>
        <dbReference type="MGI" id="MGI:1922672"/>
    </source>
</evidence>
<gene>
    <name evidence="6 8" type="primary">Mettl5</name>
</gene>
<reference key="1">
    <citation type="journal article" date="2004" name="Genome Res.">
        <title>The status, quality, and expansion of the NIH full-length cDNA project: the Mammalian Gene Collection (MGC).</title>
        <authorList>
            <consortium name="The MGC Project Team"/>
        </authorList>
    </citation>
    <scope>NUCLEOTIDE SEQUENCE [LARGE SCALE MRNA]</scope>
    <source>
        <tissue>Mammary gland</tissue>
    </source>
</reference>
<reference key="2">
    <citation type="journal article" date="2019" name="Am. J. Hum. Genet.">
        <title>Bi-allelic variants in METTL5 cause autosomal-recessive intellectual disability and microcephaly.</title>
        <authorList>
            <person name="Richard E.M."/>
            <person name="Polla D.L."/>
            <person name="Assir M.Z."/>
            <person name="Contreras M."/>
            <person name="Shahzad M."/>
            <person name="Khan A.A."/>
            <person name="Razzaq A."/>
            <person name="Akram J."/>
            <person name="Tarar M.N."/>
            <person name="Blanpied T.A."/>
            <person name="Ahmed Z.M."/>
            <person name="Abou Jamra R."/>
            <person name="Wieczorek D."/>
            <person name="van Bokhoven H."/>
            <person name="Riazuddin S."/>
            <person name="Riazuddin S."/>
        </authorList>
    </citation>
    <scope>TISSUE SPECIFICITY</scope>
</reference>
<reference key="3">
    <citation type="journal article" date="2020" name="EMBO Rep.">
        <title>The 18S rRNA m6 A methyltransferase METTL5 promotes mouse embryonic stem cell differentiation.</title>
        <authorList>
            <person name="Xing M."/>
            <person name="Liu Q."/>
            <person name="Mao C."/>
            <person name="Zeng H."/>
            <person name="Zhang X."/>
            <person name="Zhao S."/>
            <person name="Chen L."/>
            <person name="Liu M."/>
            <person name="Shen B."/>
            <person name="Guo X."/>
            <person name="Ma H."/>
            <person name="Chen H."/>
            <person name="Zhang J."/>
        </authorList>
    </citation>
    <scope>FUNCTION</scope>
    <scope>CATALYTIC ACTIVITY</scope>
    <scope>DISRUPTION PHENOTYPE</scope>
    <scope>MUTAGENESIS OF 126-ASN--PHE-129</scope>
</reference>
<reference key="4">
    <citation type="journal article" date="2020" name="Genes Dev.">
        <title>The rRNA m6A methyltransferase METTL5 is involved in pluripotency and developmental programs.</title>
        <authorList>
            <person name="Ignatova V.V."/>
            <person name="Stolz P."/>
            <person name="Kaiser S."/>
            <person name="Gustafsson T.H."/>
            <person name="Lastres P.R."/>
            <person name="Sanz-Moreno A."/>
            <person name="Cho Y.L."/>
            <person name="Amarie O.V."/>
            <person name="Aguilar-Pimentel A."/>
            <person name="Klein-Rodewald T."/>
            <person name="Calzada-Wack J."/>
            <person name="Becker L."/>
            <person name="Marschall S."/>
            <person name="Kraiger M."/>
            <person name="Garrett L."/>
            <person name="Seisenberger C."/>
            <person name="Hoelter S.M."/>
            <person name="Borland K."/>
            <person name="Van De Logt E."/>
            <person name="Jansen P.W.T.C."/>
            <person name="Baltissen M.P."/>
            <person name="Valenta M."/>
            <person name="Vermeulen M."/>
            <person name="Wurst W."/>
            <person name="Gailus-Durner V."/>
            <person name="Fuchs H."/>
            <person name="de Angelis M.H."/>
            <person name="Rando O.J."/>
            <person name="Kellner S.M."/>
            <person name="Bultmann S."/>
            <person name="Schneider R."/>
        </authorList>
    </citation>
    <scope>FUNCTION</scope>
    <scope>DISRUPTION PHENOTYPE</scope>
</reference>
<reference key="5">
    <citation type="journal article" date="2022" name="J. Biol. Chem.">
        <title>The METTL5-TRMT112 N6-methyladenosine methyltransferase complex regulates mRNA translation via 18S rRNA methylation.</title>
        <authorList>
            <person name="Sepich-Poore C."/>
            <person name="Zheng Z."/>
            <person name="Schmitt E."/>
            <person name="Wen K."/>
            <person name="Zhang Z.S."/>
            <person name="Cui X.L."/>
            <person name="Dai Q."/>
            <person name="Zhu A.C."/>
            <person name="Zhang L."/>
            <person name="Sanchez Castillo A."/>
            <person name="Tan H."/>
            <person name="Peng J."/>
            <person name="Zhuang X."/>
            <person name="He C."/>
            <person name="Nachtergaele S."/>
        </authorList>
    </citation>
    <scope>FUNCTION</scope>
    <scope>DISRUPTION PHENOTYPE</scope>
</reference>
<proteinExistence type="evidence at protein level"/>
<protein>
    <recommendedName>
        <fullName evidence="7">rRNA N(6)-adenosine-methyltransferase METTL5</fullName>
        <ecNumber evidence="4">2.1.1.-</ecNumber>
    </recommendedName>
    <alternativeName>
        <fullName evidence="7">Methyltransferase-like protein 5</fullName>
    </alternativeName>
</protein>
<feature type="chain" id="PRO_0000251920" description="rRNA N(6)-adenosine-methyltransferase METTL5">
    <location>
        <begin position="1"/>
        <end position="209"/>
    </location>
</feature>
<feature type="binding site" evidence="1">
    <location>
        <position position="28"/>
    </location>
    <ligand>
        <name>S-adenosyl-L-methionine</name>
        <dbReference type="ChEBI" id="CHEBI:59789"/>
    </ligand>
</feature>
<feature type="binding site" evidence="1">
    <location>
        <position position="31"/>
    </location>
    <ligand>
        <name>S-adenosyl-L-methionine</name>
        <dbReference type="ChEBI" id="CHEBI:59789"/>
    </ligand>
</feature>
<feature type="binding site" evidence="1">
    <location>
        <position position="59"/>
    </location>
    <ligand>
        <name>S-adenosyl-L-methionine</name>
        <dbReference type="ChEBI" id="CHEBI:59789"/>
    </ligand>
</feature>
<feature type="binding site" evidence="1">
    <location>
        <position position="62"/>
    </location>
    <ligand>
        <name>S-adenosyl-L-methionine</name>
        <dbReference type="ChEBI" id="CHEBI:59789"/>
    </ligand>
</feature>
<feature type="binding site" evidence="1">
    <location>
        <position position="64"/>
    </location>
    <ligand>
        <name>S-adenosyl-L-methionine</name>
        <dbReference type="ChEBI" id="CHEBI:59789"/>
    </ligand>
</feature>
<feature type="binding site" evidence="1">
    <location>
        <position position="81"/>
    </location>
    <ligand>
        <name>S-adenosyl-L-methionine</name>
        <dbReference type="ChEBI" id="CHEBI:59789"/>
    </ligand>
</feature>
<feature type="binding site" evidence="1">
    <location>
        <begin position="108"/>
        <end position="109"/>
    </location>
    <ligand>
        <name>S-adenosyl-L-methionine</name>
        <dbReference type="ChEBI" id="CHEBI:59789"/>
    </ligand>
</feature>
<feature type="mutagenesis site" description="Abolished rRNA N6-adenosine-methyltransferase activity." evidence="4">
    <original>NPPF</original>
    <variation>APPA</variation>
    <location>
        <begin position="126"/>
        <end position="129"/>
    </location>
</feature>
<sequence>MKKLKLKELESRLQEVDGFEKPKLLLEQYPTRPHIAACMLYTIHNTYDDIENKAVADLGCGCGVLSIGAAMLGAGLCVGFDIDEDALEIFNKNVEEFELTNVDMIQCDVYSLSNRMSKLFDTVIMNPPFGTKNNKGTDMAFLKTALGMARTAVYSLHKSSTREHIQKKAAEWKVKIEIIAELRYDLPALYNFHKKKSVDIEVDLIRFSF</sequence>
<accession>Q8K1A0</accession>